<accession>B4RVJ5</accession>
<accession>F2G288</accession>
<sequence length="382" mass="42334">MSKPIRIGMVAGEPSGDILAAGMVAELKRQYPDAIIEGIGGPNMIDAGFHSLFDMETLSVMGLVEVLAHLPAILKVKKQLLAHFEQNPPDIFVGVDAPDFNLRVEKALKARGIKTMHYVSPTVWAWREKRIHKIAKAANRVLGLFPFEQQVYDKYHVPYTFVGHTMADAIAIEPDQNAARQELGVESNAYVLAVLPGSRRGEVETLLPVFLETIEAIHVKRSDIQFLIPAANEHRLAQIKAFLQEANNAEERLPIQVTQGTSRDAMIASDVILLASGTATLEAMLCKRPMVAAYLLSPLTYKIMQRLYKAPFFTLPNLLANEAIIPELLQEEVNAENMSNQLLNFFESDNSALIARFTDLHHTLKCNADKTAAKAVVEELFA</sequence>
<evidence type="ECO:0000255" key="1">
    <source>
        <dbReference type="HAMAP-Rule" id="MF_00392"/>
    </source>
</evidence>
<dbReference type="EC" id="2.4.1.182" evidence="1"/>
<dbReference type="EMBL" id="CP001103">
    <property type="protein sequence ID" value="AEA97222.1"/>
    <property type="molecule type" value="Genomic_DNA"/>
</dbReference>
<dbReference type="RefSeq" id="WP_012517576.1">
    <property type="nucleotide sequence ID" value="NC_011138.3"/>
</dbReference>
<dbReference type="SMR" id="B4RVJ5"/>
<dbReference type="CAZy" id="GT19">
    <property type="family name" value="Glycosyltransferase Family 19"/>
</dbReference>
<dbReference type="KEGG" id="amc:MADE_1005380"/>
<dbReference type="HOGENOM" id="CLU_036577_3_0_6"/>
<dbReference type="UniPathway" id="UPA00973"/>
<dbReference type="Proteomes" id="UP000001870">
    <property type="component" value="Chromosome"/>
</dbReference>
<dbReference type="GO" id="GO:0016020">
    <property type="term" value="C:membrane"/>
    <property type="evidence" value="ECO:0007669"/>
    <property type="project" value="GOC"/>
</dbReference>
<dbReference type="GO" id="GO:0008915">
    <property type="term" value="F:lipid-A-disaccharide synthase activity"/>
    <property type="evidence" value="ECO:0007669"/>
    <property type="project" value="UniProtKB-UniRule"/>
</dbReference>
<dbReference type="GO" id="GO:0005543">
    <property type="term" value="F:phospholipid binding"/>
    <property type="evidence" value="ECO:0007669"/>
    <property type="project" value="TreeGrafter"/>
</dbReference>
<dbReference type="GO" id="GO:0009245">
    <property type="term" value="P:lipid A biosynthetic process"/>
    <property type="evidence" value="ECO:0007669"/>
    <property type="project" value="UniProtKB-UniRule"/>
</dbReference>
<dbReference type="CDD" id="cd01635">
    <property type="entry name" value="Glycosyltransferase_GTB-type"/>
    <property type="match status" value="1"/>
</dbReference>
<dbReference type="Gene3D" id="3.40.50.2000">
    <property type="entry name" value="Glycogen Phosphorylase B"/>
    <property type="match status" value="1"/>
</dbReference>
<dbReference type="HAMAP" id="MF_00392">
    <property type="entry name" value="LpxB"/>
    <property type="match status" value="1"/>
</dbReference>
<dbReference type="InterPro" id="IPR003835">
    <property type="entry name" value="Glyco_trans_19"/>
</dbReference>
<dbReference type="NCBIfam" id="TIGR00215">
    <property type="entry name" value="lpxB"/>
    <property type="match status" value="1"/>
</dbReference>
<dbReference type="PANTHER" id="PTHR30372">
    <property type="entry name" value="LIPID-A-DISACCHARIDE SYNTHASE"/>
    <property type="match status" value="1"/>
</dbReference>
<dbReference type="PANTHER" id="PTHR30372:SF4">
    <property type="entry name" value="LIPID-A-DISACCHARIDE SYNTHASE, MITOCHONDRIAL-RELATED"/>
    <property type="match status" value="1"/>
</dbReference>
<dbReference type="Pfam" id="PF02684">
    <property type="entry name" value="LpxB"/>
    <property type="match status" value="1"/>
</dbReference>
<dbReference type="SUPFAM" id="SSF53756">
    <property type="entry name" value="UDP-Glycosyltransferase/glycogen phosphorylase"/>
    <property type="match status" value="1"/>
</dbReference>
<organism>
    <name type="scientific">Alteromonas mediterranea (strain DSM 17117 / CIP 110805 / LMG 28347 / Deep ecotype)</name>
    <dbReference type="NCBI Taxonomy" id="1774373"/>
    <lineage>
        <taxon>Bacteria</taxon>
        <taxon>Pseudomonadati</taxon>
        <taxon>Pseudomonadota</taxon>
        <taxon>Gammaproteobacteria</taxon>
        <taxon>Alteromonadales</taxon>
        <taxon>Alteromonadaceae</taxon>
        <taxon>Alteromonas/Salinimonas group</taxon>
        <taxon>Alteromonas</taxon>
    </lineage>
</organism>
<keyword id="KW-0328">Glycosyltransferase</keyword>
<keyword id="KW-0441">Lipid A biosynthesis</keyword>
<keyword id="KW-0444">Lipid biosynthesis</keyword>
<keyword id="KW-0443">Lipid metabolism</keyword>
<keyword id="KW-0808">Transferase</keyword>
<proteinExistence type="inferred from homology"/>
<gene>
    <name evidence="1" type="primary">lpxB</name>
    <name type="ordered locus">MADE_1005380</name>
</gene>
<feature type="chain" id="PRO_1000191459" description="Lipid-A-disaccharide synthase">
    <location>
        <begin position="1"/>
        <end position="382"/>
    </location>
</feature>
<name>LPXB_ALTMD</name>
<reference key="1">
    <citation type="journal article" date="2008" name="ISME J.">
        <title>Comparative genomics of two ecotypes of the marine planktonic copiotroph Alteromonas macleodii suggests alternative lifestyles associated with different kinds of particulate organic matter.</title>
        <authorList>
            <person name="Ivars-Martinez E."/>
            <person name="Martin-Cuadrado A.-B."/>
            <person name="D'Auria G."/>
            <person name="Mira A."/>
            <person name="Ferriera S."/>
            <person name="Johnson J."/>
            <person name="Friedman R."/>
            <person name="Rodriguez-Valera F."/>
        </authorList>
    </citation>
    <scope>NUCLEOTIDE SEQUENCE [LARGE SCALE GENOMIC DNA]</scope>
    <source>
        <strain>DSM 17117 / CIP 110805 / LMG 28347 / Deep ecotype</strain>
    </source>
</reference>
<protein>
    <recommendedName>
        <fullName evidence="1">Lipid-A-disaccharide synthase</fullName>
        <ecNumber evidence="1">2.4.1.182</ecNumber>
    </recommendedName>
</protein>
<comment type="function">
    <text evidence="1">Condensation of UDP-2,3-diacylglucosamine and 2,3-diacylglucosamine-1-phosphate to form lipid A disaccharide, a precursor of lipid A, a phosphorylated glycolipid that anchors the lipopolysaccharide to the outer membrane of the cell.</text>
</comment>
<comment type="catalytic activity">
    <reaction evidence="1">
        <text>a lipid X + a UDP-2-N,3-O-bis[(3R)-3-hydroxyacyl]-alpha-D-glucosamine = a lipid A disaccharide + UDP + H(+)</text>
        <dbReference type="Rhea" id="RHEA:67828"/>
        <dbReference type="ChEBI" id="CHEBI:15378"/>
        <dbReference type="ChEBI" id="CHEBI:58223"/>
        <dbReference type="ChEBI" id="CHEBI:137748"/>
        <dbReference type="ChEBI" id="CHEBI:176338"/>
        <dbReference type="ChEBI" id="CHEBI:176343"/>
        <dbReference type="EC" id="2.4.1.182"/>
    </reaction>
</comment>
<comment type="pathway">
    <text evidence="1">Bacterial outer membrane biogenesis; LPS lipid A biosynthesis.</text>
</comment>
<comment type="similarity">
    <text evidence="1">Belongs to the LpxB family.</text>
</comment>